<reference key="1">
    <citation type="journal article" date="2004" name="Mol. Plant Microbe Interact.">
        <title>The genome sequence of the Gram-positive sugarcane pathogen Leifsonia xyli subsp. xyli.</title>
        <authorList>
            <person name="Monteiro-Vitorello C.B."/>
            <person name="Camargo L.E.A."/>
            <person name="Van Sluys M.A."/>
            <person name="Kitajima J.P."/>
            <person name="Truffi D."/>
            <person name="do Amaral A.M."/>
            <person name="Harakava R."/>
            <person name="de Oliveira J.C.F."/>
            <person name="Wood D."/>
            <person name="de Oliveira M.C."/>
            <person name="Miyaki C.Y."/>
            <person name="Takita M.A."/>
            <person name="da Silva A.C.R."/>
            <person name="Furlan L.R."/>
            <person name="Carraro D.M."/>
            <person name="Camarotte G."/>
            <person name="Almeida N.F. Jr."/>
            <person name="Carrer H."/>
            <person name="Coutinho L.L."/>
            <person name="El-Dorry H.A."/>
            <person name="Ferro M.I.T."/>
            <person name="Gagliardi P.R."/>
            <person name="Giglioti E."/>
            <person name="Goldman M.H.S."/>
            <person name="Goldman G.H."/>
            <person name="Kimura E.T."/>
            <person name="Ferro E.S."/>
            <person name="Kuramae E.E."/>
            <person name="Lemos E.G.M."/>
            <person name="Lemos M.V.F."/>
            <person name="Mauro S.M.Z."/>
            <person name="Machado M.A."/>
            <person name="Marino C.L."/>
            <person name="Menck C.F."/>
            <person name="Nunes L.R."/>
            <person name="Oliveira R.C."/>
            <person name="Pereira G.G."/>
            <person name="Siqueira W."/>
            <person name="de Souza A.A."/>
            <person name="Tsai S.M."/>
            <person name="Zanca A.S."/>
            <person name="Simpson A.J.G."/>
            <person name="Brumbley S.M."/>
            <person name="Setubal J.C."/>
        </authorList>
    </citation>
    <scope>NUCLEOTIDE SEQUENCE [LARGE SCALE GENOMIC DNA]</scope>
    <source>
        <strain>CTCB07</strain>
    </source>
</reference>
<gene>
    <name type="ordered locus">Lxx11490</name>
</gene>
<dbReference type="EMBL" id="AE016822">
    <property type="protein sequence ID" value="AAT88997.1"/>
    <property type="molecule type" value="Genomic_DNA"/>
</dbReference>
<dbReference type="RefSeq" id="WP_011185993.1">
    <property type="nucleotide sequence ID" value="NC_006087.1"/>
</dbReference>
<dbReference type="SMR" id="Q6AF48"/>
<dbReference type="STRING" id="281090.Lxx11490"/>
<dbReference type="KEGG" id="lxx:Lxx11490"/>
<dbReference type="eggNOG" id="COG1660">
    <property type="taxonomic scope" value="Bacteria"/>
</dbReference>
<dbReference type="HOGENOM" id="CLU_059558_0_0_11"/>
<dbReference type="Proteomes" id="UP000001306">
    <property type="component" value="Chromosome"/>
</dbReference>
<dbReference type="GO" id="GO:0005524">
    <property type="term" value="F:ATP binding"/>
    <property type="evidence" value="ECO:0007669"/>
    <property type="project" value="UniProtKB-UniRule"/>
</dbReference>
<dbReference type="GO" id="GO:0005525">
    <property type="term" value="F:GTP binding"/>
    <property type="evidence" value="ECO:0007669"/>
    <property type="project" value="UniProtKB-UniRule"/>
</dbReference>
<dbReference type="Gene3D" id="3.40.50.300">
    <property type="entry name" value="P-loop containing nucleotide triphosphate hydrolases"/>
    <property type="match status" value="1"/>
</dbReference>
<dbReference type="HAMAP" id="MF_00636">
    <property type="entry name" value="RapZ_like"/>
    <property type="match status" value="1"/>
</dbReference>
<dbReference type="InterPro" id="IPR027417">
    <property type="entry name" value="P-loop_NTPase"/>
</dbReference>
<dbReference type="InterPro" id="IPR005337">
    <property type="entry name" value="RapZ-like"/>
</dbReference>
<dbReference type="InterPro" id="IPR053930">
    <property type="entry name" value="RapZ-like_N"/>
</dbReference>
<dbReference type="InterPro" id="IPR053931">
    <property type="entry name" value="RapZ_C"/>
</dbReference>
<dbReference type="NCBIfam" id="NF003828">
    <property type="entry name" value="PRK05416.1"/>
    <property type="match status" value="1"/>
</dbReference>
<dbReference type="PANTHER" id="PTHR30448">
    <property type="entry name" value="RNASE ADAPTER PROTEIN RAPZ"/>
    <property type="match status" value="1"/>
</dbReference>
<dbReference type="PANTHER" id="PTHR30448:SF0">
    <property type="entry name" value="RNASE ADAPTER PROTEIN RAPZ"/>
    <property type="match status" value="1"/>
</dbReference>
<dbReference type="Pfam" id="PF22740">
    <property type="entry name" value="PapZ_C"/>
    <property type="match status" value="1"/>
</dbReference>
<dbReference type="Pfam" id="PF03668">
    <property type="entry name" value="RapZ-like_N"/>
    <property type="match status" value="1"/>
</dbReference>
<dbReference type="PIRSF" id="PIRSF005052">
    <property type="entry name" value="P-loopkin"/>
    <property type="match status" value="1"/>
</dbReference>
<dbReference type="SUPFAM" id="SSF52540">
    <property type="entry name" value="P-loop containing nucleoside triphosphate hydrolases"/>
    <property type="match status" value="1"/>
</dbReference>
<feature type="chain" id="PRO_0000107723" description="Nucleotide-binding protein Lxx11490">
    <location>
        <begin position="1"/>
        <end position="295"/>
    </location>
</feature>
<feature type="binding site" evidence="1">
    <location>
        <begin position="19"/>
        <end position="26"/>
    </location>
    <ligand>
        <name>ATP</name>
        <dbReference type="ChEBI" id="CHEBI:30616"/>
    </ligand>
</feature>
<feature type="binding site" evidence="1">
    <location>
        <begin position="70"/>
        <end position="73"/>
    </location>
    <ligand>
        <name>GTP</name>
        <dbReference type="ChEBI" id="CHEBI:37565"/>
    </ligand>
</feature>
<protein>
    <recommendedName>
        <fullName evidence="1">Nucleotide-binding protein Lxx11490</fullName>
    </recommendedName>
</protein>
<organism>
    <name type="scientific">Leifsonia xyli subsp. xyli (strain CTCB07)</name>
    <dbReference type="NCBI Taxonomy" id="281090"/>
    <lineage>
        <taxon>Bacteria</taxon>
        <taxon>Bacillati</taxon>
        <taxon>Actinomycetota</taxon>
        <taxon>Actinomycetes</taxon>
        <taxon>Micrococcales</taxon>
        <taxon>Microbacteriaceae</taxon>
        <taxon>Leifsonia</taxon>
    </lineage>
</organism>
<comment type="function">
    <text evidence="1">Displays ATPase and GTPase activities.</text>
</comment>
<comment type="similarity">
    <text evidence="1">Belongs to the RapZ-like family.</text>
</comment>
<sequence>MTSDVETTAEQQEVLIVTGMSGAGRSTVANALEDLDWYVVDNLPPQMLRPLIELANRAESGLPRIAAVVDVRGRNFFADLQEMIQSLREGTKVRVLFLEAADVTLVRRFEQVRRPHPLQGNGTLLDGITAERARLREIRESSDIIVDTSDLNIHQLATRITDIFADENTADVQVTVMSFGFKYGLPADADLVADARFLPNPFWKPELRPYTGLDEVVRNDVLQQNGAEEFIESYLEALRPIFAGYQRENKRHATIAVGCTGGKHRSVAIAEELAARLRSLPGLAVSIKHRDLGRE</sequence>
<keyword id="KW-0067">ATP-binding</keyword>
<keyword id="KW-0342">GTP-binding</keyword>
<keyword id="KW-0547">Nucleotide-binding</keyword>
<keyword id="KW-1185">Reference proteome</keyword>
<proteinExistence type="inferred from homology"/>
<name>Y1149_LEIXX</name>
<accession>Q6AF48</accession>
<evidence type="ECO:0000255" key="1">
    <source>
        <dbReference type="HAMAP-Rule" id="MF_00636"/>
    </source>
</evidence>